<reference key="1">
    <citation type="journal article" date="2005" name="Arch. Microbiol.">
        <title>The genome sequence of an anaerobic aromatic-degrading denitrifying bacterium, strain EbN1.</title>
        <authorList>
            <person name="Rabus R."/>
            <person name="Kube M."/>
            <person name="Heider J."/>
            <person name="Beck A."/>
            <person name="Heitmann K."/>
            <person name="Widdel F."/>
            <person name="Reinhardt R."/>
        </authorList>
    </citation>
    <scope>NUCLEOTIDE SEQUENCE [LARGE SCALE GENOMIC DNA]</scope>
    <source>
        <strain>DSM 19018 / LMG 30748 / EbN1</strain>
    </source>
</reference>
<proteinExistence type="inferred from homology"/>
<gene>
    <name evidence="2" type="primary">argF</name>
    <name type="ordered locus">AZOSEA28910</name>
    <name type="ORF">ebA5096</name>
</gene>
<feature type="chain" id="PRO_1000084835" description="Ornithine carbamoyltransferase">
    <location>
        <begin position="1"/>
        <end position="307"/>
    </location>
</feature>
<feature type="binding site" evidence="2">
    <location>
        <begin position="54"/>
        <end position="57"/>
    </location>
    <ligand>
        <name>carbamoyl phosphate</name>
        <dbReference type="ChEBI" id="CHEBI:58228"/>
    </ligand>
</feature>
<feature type="binding site" evidence="2">
    <location>
        <position position="81"/>
    </location>
    <ligand>
        <name>carbamoyl phosphate</name>
        <dbReference type="ChEBI" id="CHEBI:58228"/>
    </ligand>
</feature>
<feature type="binding site" evidence="2">
    <location>
        <position position="105"/>
    </location>
    <ligand>
        <name>carbamoyl phosphate</name>
        <dbReference type="ChEBI" id="CHEBI:58228"/>
    </ligand>
</feature>
<feature type="binding site" evidence="2">
    <location>
        <begin position="132"/>
        <end position="135"/>
    </location>
    <ligand>
        <name>carbamoyl phosphate</name>
        <dbReference type="ChEBI" id="CHEBI:58228"/>
    </ligand>
</feature>
<feature type="binding site" evidence="2">
    <location>
        <position position="163"/>
    </location>
    <ligand>
        <name>L-ornithine</name>
        <dbReference type="ChEBI" id="CHEBI:46911"/>
    </ligand>
</feature>
<feature type="binding site" evidence="2">
    <location>
        <position position="221"/>
    </location>
    <ligand>
        <name>L-ornithine</name>
        <dbReference type="ChEBI" id="CHEBI:46911"/>
    </ligand>
</feature>
<feature type="binding site" evidence="2">
    <location>
        <begin position="225"/>
        <end position="226"/>
    </location>
    <ligand>
        <name>L-ornithine</name>
        <dbReference type="ChEBI" id="CHEBI:46911"/>
    </ligand>
</feature>
<feature type="binding site" evidence="2">
    <location>
        <begin position="261"/>
        <end position="262"/>
    </location>
    <ligand>
        <name>carbamoyl phosphate</name>
        <dbReference type="ChEBI" id="CHEBI:58228"/>
    </ligand>
</feature>
<feature type="binding site" evidence="2">
    <location>
        <position position="289"/>
    </location>
    <ligand>
        <name>carbamoyl phosphate</name>
        <dbReference type="ChEBI" id="CHEBI:58228"/>
    </ligand>
</feature>
<accession>Q5P0Z8</accession>
<evidence type="ECO:0000250" key="1"/>
<evidence type="ECO:0000255" key="2">
    <source>
        <dbReference type="HAMAP-Rule" id="MF_01109"/>
    </source>
</evidence>
<organism>
    <name type="scientific">Aromatoleum aromaticum (strain DSM 19018 / LMG 30748 / EbN1)</name>
    <name type="common">Azoarcus sp. (strain EbN1)</name>
    <dbReference type="NCBI Taxonomy" id="76114"/>
    <lineage>
        <taxon>Bacteria</taxon>
        <taxon>Pseudomonadati</taxon>
        <taxon>Pseudomonadota</taxon>
        <taxon>Betaproteobacteria</taxon>
        <taxon>Rhodocyclales</taxon>
        <taxon>Rhodocyclaceae</taxon>
        <taxon>Aromatoleum</taxon>
    </lineage>
</organism>
<dbReference type="EC" id="2.1.3.3" evidence="2"/>
<dbReference type="EMBL" id="CR555306">
    <property type="protein sequence ID" value="CAI09016.1"/>
    <property type="molecule type" value="Genomic_DNA"/>
</dbReference>
<dbReference type="RefSeq" id="WP_011238697.1">
    <property type="nucleotide sequence ID" value="NC_006513.1"/>
</dbReference>
<dbReference type="SMR" id="Q5P0Z8"/>
<dbReference type="STRING" id="76114.ebA5096"/>
<dbReference type="KEGG" id="eba:ebA5096"/>
<dbReference type="eggNOG" id="COG0078">
    <property type="taxonomic scope" value="Bacteria"/>
</dbReference>
<dbReference type="HOGENOM" id="CLU_043846_3_2_4"/>
<dbReference type="OrthoDB" id="9802587at2"/>
<dbReference type="UniPathway" id="UPA00068">
    <property type="reaction ID" value="UER00112"/>
</dbReference>
<dbReference type="Proteomes" id="UP000006552">
    <property type="component" value="Chromosome"/>
</dbReference>
<dbReference type="GO" id="GO:0005737">
    <property type="term" value="C:cytoplasm"/>
    <property type="evidence" value="ECO:0007669"/>
    <property type="project" value="UniProtKB-SubCell"/>
</dbReference>
<dbReference type="GO" id="GO:0016597">
    <property type="term" value="F:amino acid binding"/>
    <property type="evidence" value="ECO:0007669"/>
    <property type="project" value="InterPro"/>
</dbReference>
<dbReference type="GO" id="GO:0004585">
    <property type="term" value="F:ornithine carbamoyltransferase activity"/>
    <property type="evidence" value="ECO:0007669"/>
    <property type="project" value="UniProtKB-UniRule"/>
</dbReference>
<dbReference type="GO" id="GO:0042450">
    <property type="term" value="P:arginine biosynthetic process via ornithine"/>
    <property type="evidence" value="ECO:0007669"/>
    <property type="project" value="TreeGrafter"/>
</dbReference>
<dbReference type="GO" id="GO:0019240">
    <property type="term" value="P:citrulline biosynthetic process"/>
    <property type="evidence" value="ECO:0007669"/>
    <property type="project" value="TreeGrafter"/>
</dbReference>
<dbReference type="GO" id="GO:0006526">
    <property type="term" value="P:L-arginine biosynthetic process"/>
    <property type="evidence" value="ECO:0007669"/>
    <property type="project" value="UniProtKB-UniRule"/>
</dbReference>
<dbReference type="FunFam" id="3.40.50.1370:FF:000008">
    <property type="entry name" value="Ornithine carbamoyltransferase"/>
    <property type="match status" value="1"/>
</dbReference>
<dbReference type="Gene3D" id="3.40.50.1370">
    <property type="entry name" value="Aspartate/ornithine carbamoyltransferase"/>
    <property type="match status" value="2"/>
</dbReference>
<dbReference type="HAMAP" id="MF_01109">
    <property type="entry name" value="OTCase"/>
    <property type="match status" value="1"/>
</dbReference>
<dbReference type="InterPro" id="IPR006132">
    <property type="entry name" value="Asp/Orn_carbamoyltranf_P-bd"/>
</dbReference>
<dbReference type="InterPro" id="IPR006130">
    <property type="entry name" value="Asp/Orn_carbamoylTrfase"/>
</dbReference>
<dbReference type="InterPro" id="IPR036901">
    <property type="entry name" value="Asp/Orn_carbamoylTrfase_sf"/>
</dbReference>
<dbReference type="InterPro" id="IPR006131">
    <property type="entry name" value="Asp_carbamoyltransf_Asp/Orn-bd"/>
</dbReference>
<dbReference type="InterPro" id="IPR002292">
    <property type="entry name" value="Orn/put_carbamltrans"/>
</dbReference>
<dbReference type="InterPro" id="IPR024904">
    <property type="entry name" value="OTCase_ArgI"/>
</dbReference>
<dbReference type="NCBIfam" id="TIGR00658">
    <property type="entry name" value="orni_carb_tr"/>
    <property type="match status" value="1"/>
</dbReference>
<dbReference type="NCBIfam" id="NF001986">
    <property type="entry name" value="PRK00779.1"/>
    <property type="match status" value="1"/>
</dbReference>
<dbReference type="PANTHER" id="PTHR45753">
    <property type="entry name" value="ORNITHINE CARBAMOYLTRANSFERASE, MITOCHONDRIAL"/>
    <property type="match status" value="1"/>
</dbReference>
<dbReference type="PANTHER" id="PTHR45753:SF3">
    <property type="entry name" value="ORNITHINE TRANSCARBAMYLASE, MITOCHONDRIAL"/>
    <property type="match status" value="1"/>
</dbReference>
<dbReference type="Pfam" id="PF00185">
    <property type="entry name" value="OTCace"/>
    <property type="match status" value="1"/>
</dbReference>
<dbReference type="Pfam" id="PF02729">
    <property type="entry name" value="OTCace_N"/>
    <property type="match status" value="1"/>
</dbReference>
<dbReference type="PRINTS" id="PR00100">
    <property type="entry name" value="AOTCASE"/>
</dbReference>
<dbReference type="PRINTS" id="PR00102">
    <property type="entry name" value="OTCASE"/>
</dbReference>
<dbReference type="SUPFAM" id="SSF53671">
    <property type="entry name" value="Aspartate/ornithine carbamoyltransferase"/>
    <property type="match status" value="1"/>
</dbReference>
<dbReference type="PROSITE" id="PS00097">
    <property type="entry name" value="CARBAMOYLTRANSFERASE"/>
    <property type="match status" value="1"/>
</dbReference>
<sequence length="307" mass="35190">MTKPRHYLQFKDFTRDDYRHVFDRTRWIKDKFKRYEPYHPLFDRTLVMIFEKASTRTRLSFEAGMQQLGGSAIYLNTRDSQLGRGEPVEDAAQVISRMSDVVMIRTFEQDIIERFAAHSRVPVINGLTNEYHPCQILADIYTFIEHRGSIQGRTVAWVGDSNNMCNTWLQAAELLDFNVHVSTPPGYEVEPERAGLYGTGHFEQFADPMEACKGADLVTTDVWTSMGFEAENDERMKDFADWCVDAEMMAAARADAVFMHCLPAHRGEEVTADVIDGAQSVVWDEAENRLHVQKALMEYLVLGKVED</sequence>
<comment type="function">
    <text evidence="1">Reversibly catalyzes the transfer of the carbamoyl group from carbamoyl phosphate (CP) to the N(epsilon) atom of ornithine (ORN) to produce L-citrulline.</text>
</comment>
<comment type="catalytic activity">
    <reaction evidence="2">
        <text>carbamoyl phosphate + L-ornithine = L-citrulline + phosphate + H(+)</text>
        <dbReference type="Rhea" id="RHEA:19513"/>
        <dbReference type="ChEBI" id="CHEBI:15378"/>
        <dbReference type="ChEBI" id="CHEBI:43474"/>
        <dbReference type="ChEBI" id="CHEBI:46911"/>
        <dbReference type="ChEBI" id="CHEBI:57743"/>
        <dbReference type="ChEBI" id="CHEBI:58228"/>
        <dbReference type="EC" id="2.1.3.3"/>
    </reaction>
</comment>
<comment type="pathway">
    <text evidence="2">Amino-acid biosynthesis; L-arginine biosynthesis; L-arginine from L-ornithine and carbamoyl phosphate: step 1/3.</text>
</comment>
<comment type="subcellular location">
    <subcellularLocation>
        <location evidence="2">Cytoplasm</location>
    </subcellularLocation>
</comment>
<comment type="similarity">
    <text evidence="2">Belongs to the aspartate/ornithine carbamoyltransferase superfamily. OTCase family.</text>
</comment>
<keyword id="KW-0028">Amino-acid biosynthesis</keyword>
<keyword id="KW-0055">Arginine biosynthesis</keyword>
<keyword id="KW-0963">Cytoplasm</keyword>
<keyword id="KW-1185">Reference proteome</keyword>
<keyword id="KW-0808">Transferase</keyword>
<name>OTC_AROAE</name>
<protein>
    <recommendedName>
        <fullName evidence="2">Ornithine carbamoyltransferase</fullName>
        <shortName evidence="2">OTCase</shortName>
        <ecNumber evidence="2">2.1.3.3</ecNumber>
    </recommendedName>
</protein>